<name>FFSF_ASPFV</name>
<keyword id="KW-0413">Isomerase</keyword>
<keyword id="KW-0732">Signal</keyword>
<gene>
    <name evidence="4" type="primary">ffsF</name>
</gene>
<sequence length="411" mass="45809">MTQIKLLLLSLAITAQSITYDLPSQWDHQWLTQQPLGSDTTCTTSHLTAFQMSKTKDPIFFSTGGTDPFLSPKMLPLNSTAGEQWEFDGVSPDAKMAFVFGFYRDPNYAILGSGNLRVSVEMLWPNGTRFAQVDYPTDSVIEECEWGTRGVWRADEFSYSFEVSRDLQTARVAMHTPQVTGVVYLDSESKPRYPDGKIYPSETSTSEALPYFHFVEPIPVAKSQVDLMILGESYVWSDGVGGMERLWGAFSWFTCLQGMNVVRLHAGPYALSLLSFTSNIKKGNEYPSIALFENGEPVFSSQRTEDSDTADYFTFTKTYDGKVTGTLRDKVTGYELELVSPGEKKHWTFIIDHESLAFEYILGGGHGGSGFAGFVQGGRVGLEQFRGIALTEALTFPKKSPLFRSQYSETS</sequence>
<organism>
    <name type="scientific">Aspergillus flavipes</name>
    <dbReference type="NCBI Taxonomy" id="41900"/>
    <lineage>
        <taxon>Eukaryota</taxon>
        <taxon>Fungi</taxon>
        <taxon>Dikarya</taxon>
        <taxon>Ascomycota</taxon>
        <taxon>Pezizomycotina</taxon>
        <taxon>Eurotiomycetes</taxon>
        <taxon>Eurotiomycetidae</taxon>
        <taxon>Eurotiales</taxon>
        <taxon>Aspergillaceae</taxon>
        <taxon>Aspergillus</taxon>
        <taxon>Aspergillus subgen. Circumdati</taxon>
    </lineage>
</organism>
<feature type="signal peptide" evidence="2">
    <location>
        <begin position="1"/>
        <end position="17"/>
    </location>
</feature>
<feature type="chain" id="PRO_5029676072" description="Diels-Alderase ffsF">
    <location>
        <begin position="18"/>
        <end position="411"/>
    </location>
</feature>
<evidence type="ECO:0000250" key="1">
    <source>
        <dbReference type="UniProtKB" id="Q0V6Q4"/>
    </source>
</evidence>
<evidence type="ECO:0000255" key="2"/>
<evidence type="ECO:0000269" key="3">
    <source>
    </source>
</evidence>
<evidence type="ECO:0000303" key="4">
    <source>
    </source>
</evidence>
<evidence type="ECO:0000305" key="5"/>
<evidence type="ECO:0000305" key="6">
    <source>
    </source>
</evidence>
<comment type="function">
    <text evidence="1 3 6">Diels-Alderase; part of the gene cluster that mediates the biosynthesis of the cytotoxic leucine-containing cytochalasans, including aspochalasin C, aspochalasin E, TMC-169, flavichalasine F, aspergillin PZ, aspochalasin M and flavichalasine G (PubMed:32913332). The first step in the pathway is catalyzed by the hybrid PKS-NRPS ffsA that utilizes 8 units of malonyl-CoA to iteratively assemble the octaketide chain before addition of L-leucine by the C-terminal NRPS modules (PubMed:32913332). Because ffsA lacks a designated enoylreductase (ER) domain, the required activity is provided the enoyl reductase fssC (Probable). The methyltransferase (MT) domain of ffsA catalyzes the alpha-methylation at C10 and C14 using S-adenosyl-L-methionine as the methyl-donating cosubstrate (Probable). Reduction by the hydrolyase ffsE, followed by dehydration and intra-molecular Diels-Alder cyclization by the Diels-Alderase ffsF then yield the required isoindolone-fused macrocycle (By similarity). A number of oxidative steps catalyzed by the tailoring cytochrome P450 monooxygenase ffsD, the FAD-linked oxidoreductase ffsJ and the short-chain dehydrogenase/reductase ffsI, are further required to afford the final products (Probable).</text>
</comment>
<comment type="pathway">
    <text evidence="6">Mycotoxin biosynthesis.</text>
</comment>
<comment type="similarity">
    <text evidence="5">Belongs to the Diels-Alderase family.</text>
</comment>
<protein>
    <recommendedName>
        <fullName evidence="4">Diels-Alderase ffsF</fullName>
        <ecNumber evidence="6">5.5.1.-</ecNumber>
    </recommendedName>
    <alternativeName>
        <fullName evidence="4">Cytochalasans biosynthesis cluster protein ffsF</fullName>
    </alternativeName>
</protein>
<reference key="1">
    <citation type="journal article" date="2020" name="J. Antibiot.">
        <title>Discovery and characterization of a cytochalasan biosynthetic cluster from the marine-derived fungus Aspergillus flavipes CNL-338.</title>
        <authorList>
            <person name="Heard S.C."/>
            <person name="Wu G."/>
            <person name="Winter J.M."/>
        </authorList>
    </citation>
    <scope>NUCLEOTIDE SEQUENCE [GENOMIC DNA]</scope>
    <scope>FUNCTION</scope>
    <scope>PATHWAY</scope>
    <source>
        <strain>CNL-338</strain>
    </source>
</reference>
<accession>A0A7L8UVG6</accession>
<proteinExistence type="inferred from homology"/>
<dbReference type="EC" id="5.5.1.-" evidence="6"/>
<dbReference type="EMBL" id="MT586757">
    <property type="protein sequence ID" value="QOG08948.1"/>
    <property type="molecule type" value="Genomic_DNA"/>
</dbReference>
<dbReference type="SMR" id="A0A7L8UVG6"/>
<dbReference type="GO" id="GO:0016853">
    <property type="term" value="F:isomerase activity"/>
    <property type="evidence" value="ECO:0007669"/>
    <property type="project" value="UniProtKB-KW"/>
</dbReference>
<dbReference type="InterPro" id="IPR054499">
    <property type="entry name" value="DA_C"/>
</dbReference>
<dbReference type="Pfam" id="PF22903">
    <property type="entry name" value="DA_C"/>
    <property type="match status" value="1"/>
</dbReference>
<dbReference type="Pfam" id="PF24137">
    <property type="entry name" value="DA_N"/>
    <property type="match status" value="1"/>
</dbReference>